<proteinExistence type="inferred from homology"/>
<reference key="1">
    <citation type="journal article" date="2005" name="Nature">
        <title>Genomic sequence of the pathogenic and allergenic filamentous fungus Aspergillus fumigatus.</title>
        <authorList>
            <person name="Nierman W.C."/>
            <person name="Pain A."/>
            <person name="Anderson M.J."/>
            <person name="Wortman J.R."/>
            <person name="Kim H.S."/>
            <person name="Arroyo J."/>
            <person name="Berriman M."/>
            <person name="Abe K."/>
            <person name="Archer D.B."/>
            <person name="Bermejo C."/>
            <person name="Bennett J.W."/>
            <person name="Bowyer P."/>
            <person name="Chen D."/>
            <person name="Collins M."/>
            <person name="Coulsen R."/>
            <person name="Davies R."/>
            <person name="Dyer P.S."/>
            <person name="Farman M.L."/>
            <person name="Fedorova N."/>
            <person name="Fedorova N.D."/>
            <person name="Feldblyum T.V."/>
            <person name="Fischer R."/>
            <person name="Fosker N."/>
            <person name="Fraser A."/>
            <person name="Garcia J.L."/>
            <person name="Garcia M.J."/>
            <person name="Goble A."/>
            <person name="Goldman G.H."/>
            <person name="Gomi K."/>
            <person name="Griffith-Jones S."/>
            <person name="Gwilliam R."/>
            <person name="Haas B.J."/>
            <person name="Haas H."/>
            <person name="Harris D.E."/>
            <person name="Horiuchi H."/>
            <person name="Huang J."/>
            <person name="Humphray S."/>
            <person name="Jimenez J."/>
            <person name="Keller N."/>
            <person name="Khouri H."/>
            <person name="Kitamoto K."/>
            <person name="Kobayashi T."/>
            <person name="Konzack S."/>
            <person name="Kulkarni R."/>
            <person name="Kumagai T."/>
            <person name="Lafton A."/>
            <person name="Latge J.-P."/>
            <person name="Li W."/>
            <person name="Lord A."/>
            <person name="Lu C."/>
            <person name="Majoros W.H."/>
            <person name="May G.S."/>
            <person name="Miller B.L."/>
            <person name="Mohamoud Y."/>
            <person name="Molina M."/>
            <person name="Monod M."/>
            <person name="Mouyna I."/>
            <person name="Mulligan S."/>
            <person name="Murphy L.D."/>
            <person name="O'Neil S."/>
            <person name="Paulsen I."/>
            <person name="Penalva M.A."/>
            <person name="Pertea M."/>
            <person name="Price C."/>
            <person name="Pritchard B.L."/>
            <person name="Quail M.A."/>
            <person name="Rabbinowitsch E."/>
            <person name="Rawlins N."/>
            <person name="Rajandream M.A."/>
            <person name="Reichard U."/>
            <person name="Renauld H."/>
            <person name="Robson G.D."/>
            <person name="Rodriguez de Cordoba S."/>
            <person name="Rodriguez-Pena J.M."/>
            <person name="Ronning C.M."/>
            <person name="Rutter S."/>
            <person name="Salzberg S.L."/>
            <person name="Sanchez M."/>
            <person name="Sanchez-Ferrero J.C."/>
            <person name="Saunders D."/>
            <person name="Seeger K."/>
            <person name="Squares R."/>
            <person name="Squares S."/>
            <person name="Takeuchi M."/>
            <person name="Tekaia F."/>
            <person name="Turner G."/>
            <person name="Vazquez de Aldana C.R."/>
            <person name="Weidman J."/>
            <person name="White O."/>
            <person name="Woodward J.R."/>
            <person name="Yu J.-H."/>
            <person name="Fraser C.M."/>
            <person name="Galagan J.E."/>
            <person name="Asai K."/>
            <person name="Machida M."/>
            <person name="Hall N."/>
            <person name="Barrell B.G."/>
            <person name="Denning D.W."/>
        </authorList>
    </citation>
    <scope>NUCLEOTIDE SEQUENCE [LARGE SCALE GENOMIC DNA]</scope>
    <source>
        <strain>ATCC MYA-4609 / CBS 101355 / FGSC A1100 / Af293</strain>
    </source>
</reference>
<sequence>MDEEGAPLSEGVQVVDPDVRAHVYSLVTALGGFNGESADRYVLGDDALACLRDIKRWLKLYDEKHNRMDVARCLGEANLVNGDLLPILTLWSTSGQKSKHMSRIALACLELLVPLTWPLEVHSEMTVNHHRHTPYLQQAQVLYKRGILSHGSGSILRTIIRIGLPSMAVPRSERTTRDEGILKLMLYFLRNIAVISPNARLAAEGDEEETSRSATINAFQNQDAFALLLTMCSNVGEDFSLQDVVLLEILFHIVKGVNVEKLFMNDAQRKAKRTDELGELLQKESSLRREYAKNAPTRHGRFGTMIWVKRDDAKVSTVSGQDVLKDSQTTLHKMDQSKKWNKPQIRRRAAEVTANNDFNTPVNINSTATKNLRMFVEEFLDSGFNPLFTHVRKAIEREADRVMDINTRQFFYTVAWFLEAERVRRAHQREKRHLGDTPLKEIEPDSFALVASVLNQETFVFLNRSMQYSYDNKDVEDLTAEMRCFTQILLTVQEMAQSPLEEDQEIADNIQNRIFYEETTHDRIVAIVRGYKDQGFGYLDACTELAHVFLRMLEHYSKENVDMHVRSRRRAKRKAKQAKQADIEGDDEEEASEEEDLMDVERISKERKFDFRRFAAKFCNQSCVDTFIAFTKYYRELNVDQLKRAHRYFYRIAFKQEMSVLLFRLDIINLFYRMIKGPGALDSNKPIFKEWEELVRQIIRRMIKKIDQRPALITELLFSKINSTVFYLEYGHEKQTISASKRPPAELEVEPREAKTIDEKIRIVVHVMVKDEHTDLVKWVSDVLNSAADEREAWESQEQHSGGQKAPNPMIPVKSDNESCQKAMFSNAKLRLLMSLVRFERLGMEDVPGASWVVPSSLNSQELRHTRSIIEQCLTEPVTENSDRDLSQLIRRKSGNNTRRDRDDQMANVDFGSDSEGDDNVPDGPLFPPNPRSRANALEQLKKQRKKRRKQAGEEEEPDEEDLEARRRARLENALARQAKIKSDLYIHASDEETDEEADQEFFRLEEQRRKEQAERIRKALLHGVVEEVSENSRKKSSGRKRQSDQYTASTADSQSKRQRRLQQTEGLDGNDDLVVAGTEARSPDSLGQGSPSLKGANDVEDTLVTSEENELDFDDDLAFSRNRTRDKVLSAENDDSDTEPPAPDTIDEDGEEAAAVAAPPRRRVRAGFVIESDSE</sequence>
<organism>
    <name type="scientific">Aspergillus fumigatus (strain ATCC MYA-4609 / CBS 101355 / FGSC A1100 / Af293)</name>
    <name type="common">Neosartorya fumigata</name>
    <dbReference type="NCBI Taxonomy" id="330879"/>
    <lineage>
        <taxon>Eukaryota</taxon>
        <taxon>Fungi</taxon>
        <taxon>Dikarya</taxon>
        <taxon>Ascomycota</taxon>
        <taxon>Pezizomycotina</taxon>
        <taxon>Eurotiomycetes</taxon>
        <taxon>Eurotiomycetidae</taxon>
        <taxon>Eurotiales</taxon>
        <taxon>Aspergillaceae</taxon>
        <taxon>Aspergillus</taxon>
        <taxon>Aspergillus subgen. Fumigati</taxon>
    </lineage>
</organism>
<comment type="function">
    <text evidence="1">Forms a fork protection complex (FPC) with csm3 and which is required for chromosome segregation during meiosis and DNA damage repair. FPC coordinates leading and lagging strand synthesis and moves with the replication fork. FPC stabilizes replication forks in a configuration that is recognized by replication checkpoint sensors (By similarity).</text>
</comment>
<comment type="subunit">
    <text evidence="1">Component of the fork protection complex (FPC) consisting of tof1 and csm3.</text>
</comment>
<comment type="subcellular location">
    <subcellularLocation>
        <location evidence="1">Nucleus</location>
    </subcellularLocation>
</comment>
<comment type="similarity">
    <text evidence="3">Belongs to the timeless family.</text>
</comment>
<keyword id="KW-0131">Cell cycle</keyword>
<keyword id="KW-0227">DNA damage</keyword>
<keyword id="KW-0234">DNA repair</keyword>
<keyword id="KW-0236">DNA replication inhibitor</keyword>
<keyword id="KW-0469">Meiosis</keyword>
<keyword id="KW-0539">Nucleus</keyword>
<keyword id="KW-1185">Reference proteome</keyword>
<accession>Q4W9M7</accession>
<dbReference type="EMBL" id="AAHF01000016">
    <property type="protein sequence ID" value="EAL84586.2"/>
    <property type="molecule type" value="Genomic_DNA"/>
</dbReference>
<dbReference type="RefSeq" id="XP_746624.2">
    <property type="nucleotide sequence ID" value="XM_741531.2"/>
</dbReference>
<dbReference type="SMR" id="Q4W9M7"/>
<dbReference type="FunCoup" id="Q4W9M7">
    <property type="interactions" value="50"/>
</dbReference>
<dbReference type="STRING" id="330879.Q4W9M7"/>
<dbReference type="EnsemblFungi" id="EAL84586">
    <property type="protein sequence ID" value="EAL84586"/>
    <property type="gene ID" value="AFUA_4G04390"/>
</dbReference>
<dbReference type="GeneID" id="3503983"/>
<dbReference type="KEGG" id="afm:AFUA_4G04390"/>
<dbReference type="VEuPathDB" id="FungiDB:Afu4g04390"/>
<dbReference type="eggNOG" id="KOG1974">
    <property type="taxonomic scope" value="Eukaryota"/>
</dbReference>
<dbReference type="HOGENOM" id="CLU_004390_0_0_1"/>
<dbReference type="InParanoid" id="Q4W9M7"/>
<dbReference type="OMA" id="VNHHRHT"/>
<dbReference type="OrthoDB" id="310853at2759"/>
<dbReference type="Proteomes" id="UP000002530">
    <property type="component" value="Chromosome 4"/>
</dbReference>
<dbReference type="GO" id="GO:0031298">
    <property type="term" value="C:replication fork protection complex"/>
    <property type="evidence" value="ECO:0000318"/>
    <property type="project" value="GO_Central"/>
</dbReference>
<dbReference type="GO" id="GO:0003677">
    <property type="term" value="F:DNA binding"/>
    <property type="evidence" value="ECO:0000318"/>
    <property type="project" value="GO_Central"/>
</dbReference>
<dbReference type="GO" id="GO:0006281">
    <property type="term" value="P:DNA repair"/>
    <property type="evidence" value="ECO:0000318"/>
    <property type="project" value="GO_Central"/>
</dbReference>
<dbReference type="GO" id="GO:0000076">
    <property type="term" value="P:DNA replication checkpoint signaling"/>
    <property type="evidence" value="ECO:0000318"/>
    <property type="project" value="GO_Central"/>
</dbReference>
<dbReference type="GO" id="GO:0051321">
    <property type="term" value="P:meiotic cell cycle"/>
    <property type="evidence" value="ECO:0007669"/>
    <property type="project" value="UniProtKB-KW"/>
</dbReference>
<dbReference type="GO" id="GO:0043111">
    <property type="term" value="P:replication fork arrest"/>
    <property type="evidence" value="ECO:0000318"/>
    <property type="project" value="GO_Central"/>
</dbReference>
<dbReference type="InterPro" id="IPR044998">
    <property type="entry name" value="Timeless"/>
</dbReference>
<dbReference type="InterPro" id="IPR006906">
    <property type="entry name" value="Timeless_N"/>
</dbReference>
<dbReference type="PANTHER" id="PTHR22940:SF4">
    <property type="entry name" value="PROTEIN TIMELESS HOMOLOG"/>
    <property type="match status" value="1"/>
</dbReference>
<dbReference type="PANTHER" id="PTHR22940">
    <property type="entry name" value="TIMEOUT/TIMELESS-2"/>
    <property type="match status" value="1"/>
</dbReference>
<dbReference type="Pfam" id="PF04821">
    <property type="entry name" value="TIMELESS"/>
    <property type="match status" value="1"/>
</dbReference>
<feature type="chain" id="PRO_0000301729" description="Topoisomerase 1-associated factor 1">
    <location>
        <begin position="1"/>
        <end position="1176"/>
    </location>
</feature>
<feature type="region of interest" description="Disordered" evidence="2">
    <location>
        <begin position="569"/>
        <end position="597"/>
    </location>
</feature>
<feature type="region of interest" description="Disordered" evidence="2">
    <location>
        <begin position="791"/>
        <end position="815"/>
    </location>
</feature>
<feature type="region of interest" description="Disordered" evidence="2">
    <location>
        <begin position="879"/>
        <end position="965"/>
    </location>
</feature>
<feature type="region of interest" description="Disordered" evidence="2">
    <location>
        <begin position="977"/>
        <end position="1000"/>
    </location>
</feature>
<feature type="region of interest" description="Disordered" evidence="2">
    <location>
        <begin position="1021"/>
        <end position="1159"/>
    </location>
</feature>
<feature type="compositionally biased region" description="Acidic residues" evidence="2">
    <location>
        <begin position="583"/>
        <end position="597"/>
    </location>
</feature>
<feature type="compositionally biased region" description="Acidic residues" evidence="2">
    <location>
        <begin position="954"/>
        <end position="963"/>
    </location>
</feature>
<feature type="compositionally biased region" description="Basic and acidic residues" evidence="2">
    <location>
        <begin position="981"/>
        <end position="991"/>
    </location>
</feature>
<feature type="compositionally biased region" description="Polar residues" evidence="2">
    <location>
        <begin position="1045"/>
        <end position="1054"/>
    </location>
</feature>
<feature type="compositionally biased region" description="Acidic residues" evidence="2">
    <location>
        <begin position="1108"/>
        <end position="1118"/>
    </location>
</feature>
<gene>
    <name type="primary">tof1</name>
    <name type="ORF">AFUA_4G04390</name>
</gene>
<evidence type="ECO:0000250" key="1"/>
<evidence type="ECO:0000256" key="2">
    <source>
        <dbReference type="SAM" id="MobiDB-lite"/>
    </source>
</evidence>
<evidence type="ECO:0000305" key="3"/>
<name>TOF1_ASPFU</name>
<protein>
    <recommendedName>
        <fullName>Topoisomerase 1-associated factor 1</fullName>
    </recommendedName>
</protein>